<sequence>MIVVDASAALAALLNDGQARQLIAAERLHVPHLVDSEIASGLRRLAQRDRLGAADGRRALQTWRRLAVTRYPVVGLFERIWEIRANLSAYDASYVALAEALNCALVTADLRLSDTGQAQCPITVVPR</sequence>
<proteinExistence type="evidence at protein level"/>
<feature type="chain" id="PRO_0000103755" description="Ribonuclease VapC9">
    <location>
        <begin position="1"/>
        <end position="127"/>
    </location>
</feature>
<feature type="domain" description="PINc" evidence="1">
    <location>
        <begin position="2"/>
        <end position="115"/>
    </location>
</feature>
<feature type="binding site" evidence="1">
    <location>
        <position position="5"/>
    </location>
    <ligand>
        <name>Mg(2+)</name>
        <dbReference type="ChEBI" id="CHEBI:18420"/>
    </ligand>
</feature>
<feature type="binding site" evidence="1">
    <location>
        <position position="91"/>
    </location>
    <ligand>
        <name>Mg(2+)</name>
        <dbReference type="ChEBI" id="CHEBI:18420"/>
    </ligand>
</feature>
<accession>P9WFA9</accession>
<accession>L0T6X4</accession>
<accession>P64773</accession>
<accession>P71550</accession>
<evidence type="ECO:0000255" key="1">
    <source>
        <dbReference type="HAMAP-Rule" id="MF_00265"/>
    </source>
</evidence>
<reference key="1">
    <citation type="journal article" date="1998" name="Nature">
        <title>Deciphering the biology of Mycobacterium tuberculosis from the complete genome sequence.</title>
        <authorList>
            <person name="Cole S.T."/>
            <person name="Brosch R."/>
            <person name="Parkhill J."/>
            <person name="Garnier T."/>
            <person name="Churcher C.M."/>
            <person name="Harris D.E."/>
            <person name="Gordon S.V."/>
            <person name="Eiglmeier K."/>
            <person name="Gas S."/>
            <person name="Barry C.E. III"/>
            <person name="Tekaia F."/>
            <person name="Badcock K."/>
            <person name="Basham D."/>
            <person name="Brown D."/>
            <person name="Chillingworth T."/>
            <person name="Connor R."/>
            <person name="Davies R.M."/>
            <person name="Devlin K."/>
            <person name="Feltwell T."/>
            <person name="Gentles S."/>
            <person name="Hamlin N."/>
            <person name="Holroyd S."/>
            <person name="Hornsby T."/>
            <person name="Jagels K."/>
            <person name="Krogh A."/>
            <person name="McLean J."/>
            <person name="Moule S."/>
            <person name="Murphy L.D."/>
            <person name="Oliver S."/>
            <person name="Osborne J."/>
            <person name="Quail M.A."/>
            <person name="Rajandream M.A."/>
            <person name="Rogers J."/>
            <person name="Rutter S."/>
            <person name="Seeger K."/>
            <person name="Skelton S."/>
            <person name="Squares S."/>
            <person name="Squares R."/>
            <person name="Sulston J.E."/>
            <person name="Taylor K."/>
            <person name="Whitehead S."/>
            <person name="Barrell B.G."/>
        </authorList>
    </citation>
    <scope>NUCLEOTIDE SEQUENCE [LARGE SCALE GENOMIC DNA]</scope>
    <source>
        <strain>ATCC 25618 / H37Rv</strain>
    </source>
</reference>
<reference key="2">
    <citation type="journal article" date="2005" name="Nucleic Acids Res.">
        <title>Toxin-antitoxin loci are highly abundant in free-living but lost from host-associated prokaryotes.</title>
        <authorList>
            <person name="Pandey D.P."/>
            <person name="Gerdes K."/>
        </authorList>
    </citation>
    <scope>POSSIBLE FUNCTION</scope>
    <source>
        <strain>ATCC 25618 / H37Rv</strain>
    </source>
</reference>
<reference key="3">
    <citation type="journal article" date="2011" name="Mol. Cell. Proteomics">
        <title>Proteogenomic analysis of Mycobacterium tuberculosis by high resolution mass spectrometry.</title>
        <authorList>
            <person name="Kelkar D.S."/>
            <person name="Kumar D."/>
            <person name="Kumar P."/>
            <person name="Balakrishnan L."/>
            <person name="Muthusamy B."/>
            <person name="Yadav A.K."/>
            <person name="Shrivastava P."/>
            <person name="Marimuthu A."/>
            <person name="Anand S."/>
            <person name="Sundaram H."/>
            <person name="Kingsbury R."/>
            <person name="Harsha H.C."/>
            <person name="Nair B."/>
            <person name="Prasad T.S."/>
            <person name="Chauhan D.S."/>
            <person name="Katoch K."/>
            <person name="Katoch V.M."/>
            <person name="Kumar P."/>
            <person name="Chaerkady R."/>
            <person name="Ramachandran S."/>
            <person name="Dash D."/>
            <person name="Pandey A."/>
        </authorList>
    </citation>
    <scope>IDENTIFICATION BY MASS SPECTROMETRY [LARGE SCALE ANALYSIS]</scope>
    <source>
        <strain>ATCC 25618 / H37Rv</strain>
    </source>
</reference>
<organism>
    <name type="scientific">Mycobacterium tuberculosis (strain ATCC 25618 / H37Rv)</name>
    <dbReference type="NCBI Taxonomy" id="83332"/>
    <lineage>
        <taxon>Bacteria</taxon>
        <taxon>Bacillati</taxon>
        <taxon>Actinomycetota</taxon>
        <taxon>Actinomycetes</taxon>
        <taxon>Mycobacteriales</taxon>
        <taxon>Mycobacteriaceae</taxon>
        <taxon>Mycobacterium</taxon>
        <taxon>Mycobacterium tuberculosis complex</taxon>
    </lineage>
</organism>
<dbReference type="EC" id="3.1.-.-" evidence="1"/>
<dbReference type="EMBL" id="AL123456">
    <property type="protein sequence ID" value="CCP43709.1"/>
    <property type="molecule type" value="Genomic_DNA"/>
</dbReference>
<dbReference type="PIR" id="F70717">
    <property type="entry name" value="F70717"/>
</dbReference>
<dbReference type="RefSeq" id="NP_215475.1">
    <property type="nucleotide sequence ID" value="NC_000962.3"/>
</dbReference>
<dbReference type="RefSeq" id="WP_003404903.1">
    <property type="nucleotide sequence ID" value="NZ_NVQJ01000001.1"/>
</dbReference>
<dbReference type="SMR" id="P9WFA9"/>
<dbReference type="STRING" id="83332.Rv0960"/>
<dbReference type="PaxDb" id="83332-Rv0960"/>
<dbReference type="DNASU" id="885158"/>
<dbReference type="GeneID" id="885158"/>
<dbReference type="KEGG" id="mtu:Rv0960"/>
<dbReference type="KEGG" id="mtv:RVBD_0960"/>
<dbReference type="TubercuList" id="Rv0960"/>
<dbReference type="eggNOG" id="COG4113">
    <property type="taxonomic scope" value="Bacteria"/>
</dbReference>
<dbReference type="InParanoid" id="P9WFA9"/>
<dbReference type="OrthoDB" id="4377304at2"/>
<dbReference type="PhylomeDB" id="P9WFA9"/>
<dbReference type="Proteomes" id="UP000001584">
    <property type="component" value="Chromosome"/>
</dbReference>
<dbReference type="GO" id="GO:0000287">
    <property type="term" value="F:magnesium ion binding"/>
    <property type="evidence" value="ECO:0007669"/>
    <property type="project" value="UniProtKB-UniRule"/>
</dbReference>
<dbReference type="GO" id="GO:0004540">
    <property type="term" value="F:RNA nuclease activity"/>
    <property type="evidence" value="ECO:0007669"/>
    <property type="project" value="InterPro"/>
</dbReference>
<dbReference type="CDD" id="cd09873">
    <property type="entry name" value="PIN_Pae0151-like"/>
    <property type="match status" value="1"/>
</dbReference>
<dbReference type="Gene3D" id="3.40.50.1010">
    <property type="entry name" value="5'-nuclease"/>
    <property type="match status" value="1"/>
</dbReference>
<dbReference type="HAMAP" id="MF_00265">
    <property type="entry name" value="VapC_Nob1"/>
    <property type="match status" value="1"/>
</dbReference>
<dbReference type="InterPro" id="IPR029060">
    <property type="entry name" value="PIN-like_dom_sf"/>
</dbReference>
<dbReference type="InterPro" id="IPR002716">
    <property type="entry name" value="PIN_dom"/>
</dbReference>
<dbReference type="InterPro" id="IPR044153">
    <property type="entry name" value="PIN_Pae0151-like"/>
</dbReference>
<dbReference type="InterPro" id="IPR051619">
    <property type="entry name" value="TypeII_TA_RNase_PINc/VapC"/>
</dbReference>
<dbReference type="InterPro" id="IPR022907">
    <property type="entry name" value="VapC_family"/>
</dbReference>
<dbReference type="PANTHER" id="PTHR35901:SF1">
    <property type="entry name" value="EXONUCLEASE VAPC9"/>
    <property type="match status" value="1"/>
</dbReference>
<dbReference type="PANTHER" id="PTHR35901">
    <property type="entry name" value="RIBONUCLEASE VAPC3"/>
    <property type="match status" value="1"/>
</dbReference>
<dbReference type="Pfam" id="PF01850">
    <property type="entry name" value="PIN"/>
    <property type="match status" value="1"/>
</dbReference>
<dbReference type="SUPFAM" id="SSF88723">
    <property type="entry name" value="PIN domain-like"/>
    <property type="match status" value="1"/>
</dbReference>
<keyword id="KW-0378">Hydrolase</keyword>
<keyword id="KW-0460">Magnesium</keyword>
<keyword id="KW-0479">Metal-binding</keyword>
<keyword id="KW-0540">Nuclease</keyword>
<keyword id="KW-1185">Reference proteome</keyword>
<keyword id="KW-1277">Toxin-antitoxin system</keyword>
<comment type="function">
    <text evidence="1">Toxic component of a type II toxin-antitoxin (TA) system. An RNase. The cognate antitoxin is VapB9 (By similarity).</text>
</comment>
<comment type="cofactor">
    <cofactor evidence="1">
        <name>Mg(2+)</name>
        <dbReference type="ChEBI" id="CHEBI:18420"/>
    </cofactor>
</comment>
<comment type="similarity">
    <text evidence="1">Belongs to the PINc/VapC protein family.</text>
</comment>
<gene>
    <name evidence="1" type="primary">vapC9</name>
    <name type="ordered locus">Rv0960</name>
    <name type="ORF">MTCY10D7.14c</name>
</gene>
<name>VAPC9_MYCTU</name>
<protein>
    <recommendedName>
        <fullName evidence="1">Ribonuclease VapC9</fullName>
        <shortName evidence="1">RNase VapC9</shortName>
        <ecNumber evidence="1">3.1.-.-</ecNumber>
    </recommendedName>
    <alternativeName>
        <fullName evidence="1">Toxin VapC9</fullName>
    </alternativeName>
</protein>